<comment type="function">
    <text evidence="2">Mediates folate import into chloroplast.</text>
</comment>
<comment type="subcellular location">
    <subcellularLocation>
        <location evidence="2">Plastid</location>
        <location evidence="2">Chloroplast membrane</location>
        <topology evidence="2">Multi-pass membrane protein</topology>
    </subcellularLocation>
</comment>
<comment type="tissue specificity">
    <text evidence="2">Ubiquitous.</text>
</comment>
<comment type="developmental stage">
    <text evidence="2">Expressed throughout development.</text>
</comment>
<comment type="disruption phenotype">
    <text evidence="2">No visible phenotype.</text>
</comment>
<comment type="miscellaneous">
    <text>Appears to be a chloroplast envelope-located membrane protein lacking an N-terminal-located transit peptide.</text>
</comment>
<comment type="similarity">
    <text evidence="3">Belongs to the mitochondrial carrier (TC 2.A.29) family.</text>
</comment>
<comment type="sequence caution" evidence="3">
    <conflict type="erroneous gene model prediction">
        <sequence resource="EMBL-CDS" id="BAB10914"/>
    </conflict>
</comment>
<reference key="1">
    <citation type="journal article" date="2005" name="J. Biol. Chem.">
        <title>Folate metabolism in plants: an Arabidopsis homolog of the mammalian mitochondrial folate transporter mediates folate import into chloroplasts.</title>
        <authorList>
            <person name="Bedhomme M."/>
            <person name="Hoffmann M."/>
            <person name="McCarthy E.A."/>
            <person name="Gambonnet B."/>
            <person name="Moran R.G."/>
            <person name="Rebeille F."/>
            <person name="Ravanel S."/>
        </authorList>
    </citation>
    <scope>NUCLEOTIDE SEQUENCE [MRNA]</scope>
    <scope>FUNCTION</scope>
    <scope>SUBCELLULAR LOCATION</scope>
    <scope>DISRUPTION PHENOTYPE</scope>
    <scope>TISSUE SPECIFICITY</scope>
    <scope>DEVELOPMENTAL STAGE</scope>
    <source>
        <strain>cv. Wassilewskija</strain>
    </source>
</reference>
<reference key="2">
    <citation type="journal article" date="1998" name="DNA Res.">
        <title>Structural analysis of Arabidopsis thaliana chromosome 5. VI. Sequence features of the regions of 1,367,185 bp covered by 19 physically assigned P1 and TAC clones.</title>
        <authorList>
            <person name="Kotani H."/>
            <person name="Nakamura Y."/>
            <person name="Sato S."/>
            <person name="Asamizu E."/>
            <person name="Kaneko T."/>
            <person name="Miyajima N."/>
            <person name="Tabata S."/>
        </authorList>
    </citation>
    <scope>NUCLEOTIDE SEQUENCE [LARGE SCALE GENOMIC DNA]</scope>
    <source>
        <strain>cv. Columbia</strain>
    </source>
</reference>
<reference key="3">
    <citation type="journal article" date="2017" name="Plant J.">
        <title>Araport11: a complete reannotation of the Arabidopsis thaliana reference genome.</title>
        <authorList>
            <person name="Cheng C.Y."/>
            <person name="Krishnakumar V."/>
            <person name="Chan A.P."/>
            <person name="Thibaud-Nissen F."/>
            <person name="Schobel S."/>
            <person name="Town C.D."/>
        </authorList>
    </citation>
    <scope>GENOME REANNOTATION</scope>
    <source>
        <strain>cv. Columbia</strain>
    </source>
</reference>
<reference key="4">
    <citation type="journal article" date="2003" name="Science">
        <title>Empirical analysis of transcriptional activity in the Arabidopsis genome.</title>
        <authorList>
            <person name="Yamada K."/>
            <person name="Lim J."/>
            <person name="Dale J.M."/>
            <person name="Chen H."/>
            <person name="Shinn P."/>
            <person name="Palm C.J."/>
            <person name="Southwick A.M."/>
            <person name="Wu H.C."/>
            <person name="Kim C.J."/>
            <person name="Nguyen M."/>
            <person name="Pham P.K."/>
            <person name="Cheuk R.F."/>
            <person name="Karlin-Newmann G."/>
            <person name="Liu S.X."/>
            <person name="Lam B."/>
            <person name="Sakano H."/>
            <person name="Wu T."/>
            <person name="Yu G."/>
            <person name="Miranda M."/>
            <person name="Quach H.L."/>
            <person name="Tripp M."/>
            <person name="Chang C.H."/>
            <person name="Lee J.M."/>
            <person name="Toriumi M.J."/>
            <person name="Chan M.M."/>
            <person name="Tang C.C."/>
            <person name="Onodera C.S."/>
            <person name="Deng J.M."/>
            <person name="Akiyama K."/>
            <person name="Ansari Y."/>
            <person name="Arakawa T."/>
            <person name="Banh J."/>
            <person name="Banno F."/>
            <person name="Bowser L."/>
            <person name="Brooks S.Y."/>
            <person name="Carninci P."/>
            <person name="Chao Q."/>
            <person name="Choy N."/>
            <person name="Enju A."/>
            <person name="Goldsmith A.D."/>
            <person name="Gurjal M."/>
            <person name="Hansen N.F."/>
            <person name="Hayashizaki Y."/>
            <person name="Johnson-Hopson C."/>
            <person name="Hsuan V.W."/>
            <person name="Iida K."/>
            <person name="Karnes M."/>
            <person name="Khan S."/>
            <person name="Koesema E."/>
            <person name="Ishida J."/>
            <person name="Jiang P.X."/>
            <person name="Jones T."/>
            <person name="Kawai J."/>
            <person name="Kamiya A."/>
            <person name="Meyers C."/>
            <person name="Nakajima M."/>
            <person name="Narusaka M."/>
            <person name="Seki M."/>
            <person name="Sakurai T."/>
            <person name="Satou M."/>
            <person name="Tamse R."/>
            <person name="Vaysberg M."/>
            <person name="Wallender E.K."/>
            <person name="Wong C."/>
            <person name="Yamamura Y."/>
            <person name="Yuan S."/>
            <person name="Shinozaki K."/>
            <person name="Davis R.W."/>
            <person name="Theologis A."/>
            <person name="Ecker J.R."/>
        </authorList>
    </citation>
    <scope>NUCLEOTIDE SEQUENCE [LARGE SCALE MRNA]</scope>
    <source>
        <strain>cv. Columbia</strain>
    </source>
</reference>
<reference key="5">
    <citation type="submission" date="2006-07" db="EMBL/GenBank/DDBJ databases">
        <title>Large-scale analysis of RIKEN Arabidopsis full-length (RAFL) cDNAs.</title>
        <authorList>
            <person name="Totoki Y."/>
            <person name="Seki M."/>
            <person name="Ishida J."/>
            <person name="Nakajima M."/>
            <person name="Enju A."/>
            <person name="Kamiya A."/>
            <person name="Narusaka M."/>
            <person name="Shin-i T."/>
            <person name="Nakagawa M."/>
            <person name="Sakamoto N."/>
            <person name="Oishi K."/>
            <person name="Kohara Y."/>
            <person name="Kobayashi M."/>
            <person name="Toyoda A."/>
            <person name="Sakaki Y."/>
            <person name="Sakurai T."/>
            <person name="Iida K."/>
            <person name="Akiyama K."/>
            <person name="Satou M."/>
            <person name="Toyoda T."/>
            <person name="Konagaya A."/>
            <person name="Carninci P."/>
            <person name="Kawai J."/>
            <person name="Hayashizaki Y."/>
            <person name="Shinozaki K."/>
        </authorList>
    </citation>
    <scope>NUCLEOTIDE SEQUENCE [LARGE SCALE MRNA]</scope>
    <source>
        <strain>cv. Columbia</strain>
    </source>
</reference>
<reference key="6">
    <citation type="submission" date="2002-03" db="EMBL/GenBank/DDBJ databases">
        <title>Full-length cDNA from Arabidopsis thaliana.</title>
        <authorList>
            <person name="Brover V.V."/>
            <person name="Troukhan M.E."/>
            <person name="Alexandrov N.A."/>
            <person name="Lu Y.-P."/>
            <person name="Flavell R.B."/>
            <person name="Feldmann K.A."/>
        </authorList>
    </citation>
    <scope>NUCLEOTIDE SEQUENCE [LARGE SCALE MRNA]</scope>
</reference>
<feature type="chain" id="PRO_0000420697" description="Folate transporter 1, chloroplastic">
    <location>
        <begin position="1"/>
        <end position="308"/>
    </location>
</feature>
<feature type="transmembrane region" description="Helical; Name=1" evidence="1">
    <location>
        <begin position="10"/>
        <end position="30"/>
    </location>
</feature>
<feature type="transmembrane region" description="Helical; Name=2" evidence="1">
    <location>
        <begin position="74"/>
        <end position="91"/>
    </location>
</feature>
<feature type="transmembrane region" description="Helical; Name=3" evidence="1">
    <location>
        <begin position="110"/>
        <end position="130"/>
    </location>
</feature>
<feature type="transmembrane region" description="Helical; Name=4" evidence="1">
    <location>
        <begin position="164"/>
        <end position="184"/>
    </location>
</feature>
<feature type="transmembrane region" description="Helical; Name=5" evidence="1">
    <location>
        <begin position="216"/>
        <end position="236"/>
    </location>
</feature>
<feature type="transmembrane region" description="Helical; Name=6" evidence="1">
    <location>
        <begin position="274"/>
        <end position="293"/>
    </location>
</feature>
<feature type="repeat" description="Solcar 1">
    <location>
        <begin position="4"/>
        <end position="94"/>
    </location>
</feature>
<feature type="repeat" description="Solcar 2">
    <location>
        <begin position="104"/>
        <end position="192"/>
    </location>
</feature>
<feature type="repeat" description="Solcar 3">
    <location>
        <begin position="213"/>
        <end position="299"/>
    </location>
</feature>
<feature type="sequence conflict" description="In Ref. 1; CAH65737 and 6; AAM61381." evidence="3" ref="1 6">
    <original>S</original>
    <variation>P</variation>
    <location>
        <position position="26"/>
    </location>
</feature>
<feature type="sequence conflict" description="In Ref. 6; AAM61381." evidence="3" ref="6">
    <original>I</original>
    <variation>V</variation>
    <location>
        <position position="259"/>
    </location>
</feature>
<sequence length="308" mass="34119">MAASWQWENATAGAVAGFATVAAMHSLDVVRTRFQVNDGRGSSLPTYKNTAHAVFTIARLEGLRGLYAGFFPAVIGSTVSWGLYFFFYGRAKQRYARGRDDEKLSPALHLASAAEAGALVCLCTNPIWLVKTRLQLQTPLHQTQPYSGLLDAFRTIVKEEGPRALYKGIVPGLVLVSHGAIQFTAYEELRKIIVDLKERRRKSESTDNLLNSADYAALGGSSKVAAVLLTYPFQVIRARLQQRPSTNGIPRYIDSLHVIRETARYEGLRGFYRGLTANLLKNVPASSITFIVYENVLKLLKQHPTTKD</sequence>
<gene>
    <name type="primary">FOLT1</name>
    <name type="ordered locus">At5g66380</name>
    <name type="ORF">K1F13.3</name>
</gene>
<name>FOLT1_ARATH</name>
<proteinExistence type="evidence at transcript level"/>
<accession>Q7XA87</accession>
<accession>Q4A3R4</accession>
<accession>Q8LFJ3</accession>
<accession>Q9FK00</accession>
<organism>
    <name type="scientific">Arabidopsis thaliana</name>
    <name type="common">Mouse-ear cress</name>
    <dbReference type="NCBI Taxonomy" id="3702"/>
    <lineage>
        <taxon>Eukaryota</taxon>
        <taxon>Viridiplantae</taxon>
        <taxon>Streptophyta</taxon>
        <taxon>Embryophyta</taxon>
        <taxon>Tracheophyta</taxon>
        <taxon>Spermatophyta</taxon>
        <taxon>Magnoliopsida</taxon>
        <taxon>eudicotyledons</taxon>
        <taxon>Gunneridae</taxon>
        <taxon>Pentapetalae</taxon>
        <taxon>rosids</taxon>
        <taxon>malvids</taxon>
        <taxon>Brassicales</taxon>
        <taxon>Brassicaceae</taxon>
        <taxon>Camelineae</taxon>
        <taxon>Arabidopsis</taxon>
    </lineage>
</organism>
<protein>
    <recommendedName>
        <fullName>Folate transporter 1, chloroplastic</fullName>
        <shortName>AtFOLT1</shortName>
    </recommendedName>
</protein>
<keyword id="KW-0150">Chloroplast</keyword>
<keyword id="KW-0472">Membrane</keyword>
<keyword id="KW-0934">Plastid</keyword>
<keyword id="KW-1185">Reference proteome</keyword>
<keyword id="KW-0677">Repeat</keyword>
<keyword id="KW-0812">Transmembrane</keyword>
<keyword id="KW-1133">Transmembrane helix</keyword>
<keyword id="KW-0813">Transport</keyword>
<dbReference type="EMBL" id="AJ852535">
    <property type="protein sequence ID" value="CAH65737.1"/>
    <property type="molecule type" value="mRNA"/>
</dbReference>
<dbReference type="EMBL" id="AB013389">
    <property type="protein sequence ID" value="BAB10914.1"/>
    <property type="status" value="ALT_SEQ"/>
    <property type="molecule type" value="Genomic_DNA"/>
</dbReference>
<dbReference type="EMBL" id="CP002688">
    <property type="protein sequence ID" value="AED98206.1"/>
    <property type="molecule type" value="Genomic_DNA"/>
</dbReference>
<dbReference type="EMBL" id="BT010139">
    <property type="protein sequence ID" value="AAQ22608.1"/>
    <property type="molecule type" value="mRNA"/>
</dbReference>
<dbReference type="EMBL" id="AK227464">
    <property type="protein sequence ID" value="BAE99467.1"/>
    <property type="molecule type" value="mRNA"/>
</dbReference>
<dbReference type="EMBL" id="AY084815">
    <property type="protein sequence ID" value="AAM61381.1"/>
    <property type="molecule type" value="mRNA"/>
</dbReference>
<dbReference type="RefSeq" id="NP_569032.1">
    <property type="nucleotide sequence ID" value="NM_126036.4"/>
</dbReference>
<dbReference type="SMR" id="Q7XA87"/>
<dbReference type="BioGRID" id="22012">
    <property type="interactions" value="1"/>
</dbReference>
<dbReference type="FunCoup" id="Q7XA87">
    <property type="interactions" value="3607"/>
</dbReference>
<dbReference type="STRING" id="3702.Q7XA87"/>
<dbReference type="TCDB" id="2.A.29.10.3">
    <property type="family name" value="the mitochondrial carrier (mc) family"/>
</dbReference>
<dbReference type="PaxDb" id="3702-AT5G66380.1"/>
<dbReference type="ProteomicsDB" id="230559"/>
<dbReference type="EnsemblPlants" id="AT5G66380.1">
    <property type="protein sequence ID" value="AT5G66380.1"/>
    <property type="gene ID" value="AT5G66380"/>
</dbReference>
<dbReference type="GeneID" id="836770"/>
<dbReference type="Gramene" id="AT5G66380.1">
    <property type="protein sequence ID" value="AT5G66380.1"/>
    <property type="gene ID" value="AT5G66380"/>
</dbReference>
<dbReference type="KEGG" id="ath:AT5G66380"/>
<dbReference type="Araport" id="AT5G66380"/>
<dbReference type="TAIR" id="AT5G66380">
    <property type="gene designation" value="FOLT1"/>
</dbReference>
<dbReference type="eggNOG" id="KOG0764">
    <property type="taxonomic scope" value="Eukaryota"/>
</dbReference>
<dbReference type="HOGENOM" id="CLU_015166_6_4_1"/>
<dbReference type="InParanoid" id="Q7XA87"/>
<dbReference type="OMA" id="WVMYEQM"/>
<dbReference type="PhylomeDB" id="Q7XA87"/>
<dbReference type="PRO" id="PR:Q7XA87"/>
<dbReference type="Proteomes" id="UP000006548">
    <property type="component" value="Chromosome 5"/>
</dbReference>
<dbReference type="ExpressionAtlas" id="Q7XA87">
    <property type="expression patterns" value="baseline and differential"/>
</dbReference>
<dbReference type="GO" id="GO:0009507">
    <property type="term" value="C:chloroplast"/>
    <property type="evidence" value="ECO:0000314"/>
    <property type="project" value="TAIR"/>
</dbReference>
<dbReference type="GO" id="GO:0009941">
    <property type="term" value="C:chloroplast envelope"/>
    <property type="evidence" value="ECO:0000314"/>
    <property type="project" value="TAIR"/>
</dbReference>
<dbReference type="GO" id="GO:0031969">
    <property type="term" value="C:chloroplast membrane"/>
    <property type="evidence" value="ECO:0007669"/>
    <property type="project" value="UniProtKB-SubCell"/>
</dbReference>
<dbReference type="GO" id="GO:0006862">
    <property type="term" value="P:nucleotide transport"/>
    <property type="evidence" value="ECO:0007669"/>
    <property type="project" value="InterPro"/>
</dbReference>
<dbReference type="GO" id="GO:0055085">
    <property type="term" value="P:transmembrane transport"/>
    <property type="evidence" value="ECO:0007669"/>
    <property type="project" value="InterPro"/>
</dbReference>
<dbReference type="FunFam" id="1.50.40.10:FF:000090">
    <property type="entry name" value="Folate transporter 1, chloroplastic"/>
    <property type="match status" value="1"/>
</dbReference>
<dbReference type="FunFam" id="1.50.40.10:FF:000073">
    <property type="entry name" value="folate transporter 1, chloroplastic isoform X1"/>
    <property type="match status" value="1"/>
</dbReference>
<dbReference type="Gene3D" id="1.50.40.10">
    <property type="entry name" value="Mitochondrial carrier domain"/>
    <property type="match status" value="2"/>
</dbReference>
<dbReference type="InterPro" id="IPR018108">
    <property type="entry name" value="Mitochondrial_sb/sol_carrier"/>
</dbReference>
<dbReference type="InterPro" id="IPR023395">
    <property type="entry name" value="Mt_carrier_dom_sf"/>
</dbReference>
<dbReference type="InterPro" id="IPR044712">
    <property type="entry name" value="SLC25A32-like"/>
</dbReference>
<dbReference type="PANTHER" id="PTHR45683">
    <property type="entry name" value="MITOCHONDRIAL NICOTINAMIDE ADENINE DINUCLEOTIDE TRANSPORTER 1-RELATED-RELATED"/>
    <property type="match status" value="1"/>
</dbReference>
<dbReference type="Pfam" id="PF00153">
    <property type="entry name" value="Mito_carr"/>
    <property type="match status" value="3"/>
</dbReference>
<dbReference type="SUPFAM" id="SSF103506">
    <property type="entry name" value="Mitochondrial carrier"/>
    <property type="match status" value="1"/>
</dbReference>
<dbReference type="PROSITE" id="PS50920">
    <property type="entry name" value="SOLCAR"/>
    <property type="match status" value="3"/>
</dbReference>
<evidence type="ECO:0000255" key="1"/>
<evidence type="ECO:0000269" key="2">
    <source>
    </source>
</evidence>
<evidence type="ECO:0000305" key="3"/>